<dbReference type="EMBL" id="CP000087">
    <property type="protein sequence ID" value="ABE04137.1"/>
    <property type="molecule type" value="Genomic_DNA"/>
</dbReference>
<dbReference type="RefSeq" id="WP_011476752.1">
    <property type="nucleotide sequence ID" value="NC_007940.1"/>
</dbReference>
<dbReference type="SMR" id="Q1RKH7"/>
<dbReference type="KEGG" id="rbe:RBE_0056"/>
<dbReference type="eggNOG" id="COG0568">
    <property type="taxonomic scope" value="Bacteria"/>
</dbReference>
<dbReference type="HOGENOM" id="CLU_014793_7_1_5"/>
<dbReference type="OrthoDB" id="9809557at2"/>
<dbReference type="Proteomes" id="UP000001951">
    <property type="component" value="Chromosome"/>
</dbReference>
<dbReference type="GO" id="GO:0005737">
    <property type="term" value="C:cytoplasm"/>
    <property type="evidence" value="ECO:0007669"/>
    <property type="project" value="UniProtKB-SubCell"/>
</dbReference>
<dbReference type="GO" id="GO:0003677">
    <property type="term" value="F:DNA binding"/>
    <property type="evidence" value="ECO:0007669"/>
    <property type="project" value="UniProtKB-UniRule"/>
</dbReference>
<dbReference type="GO" id="GO:0016987">
    <property type="term" value="F:sigma factor activity"/>
    <property type="evidence" value="ECO:0007669"/>
    <property type="project" value="UniProtKB-UniRule"/>
</dbReference>
<dbReference type="GO" id="GO:0006352">
    <property type="term" value="P:DNA-templated transcription initiation"/>
    <property type="evidence" value="ECO:0007669"/>
    <property type="project" value="UniProtKB-UniRule"/>
</dbReference>
<dbReference type="CDD" id="cd06171">
    <property type="entry name" value="Sigma70_r4"/>
    <property type="match status" value="1"/>
</dbReference>
<dbReference type="FunFam" id="1.10.601.10:FF:000001">
    <property type="entry name" value="RNA polymerase sigma factor SigA"/>
    <property type="match status" value="1"/>
</dbReference>
<dbReference type="Gene3D" id="1.10.601.10">
    <property type="entry name" value="RNA Polymerase Primary Sigma Factor"/>
    <property type="match status" value="1"/>
</dbReference>
<dbReference type="Gene3D" id="1.10.220.120">
    <property type="entry name" value="Sigma-70 factor, region 1.1"/>
    <property type="match status" value="1"/>
</dbReference>
<dbReference type="Gene3D" id="1.10.10.10">
    <property type="entry name" value="Winged helix-like DNA-binding domain superfamily/Winged helix DNA-binding domain"/>
    <property type="match status" value="2"/>
</dbReference>
<dbReference type="HAMAP" id="MF_00963">
    <property type="entry name" value="Sigma70_RpoD_SigA"/>
    <property type="match status" value="1"/>
</dbReference>
<dbReference type="InterPro" id="IPR014284">
    <property type="entry name" value="RNA_pol_sigma-70_dom"/>
</dbReference>
<dbReference type="InterPro" id="IPR000943">
    <property type="entry name" value="RNA_pol_sigma70"/>
</dbReference>
<dbReference type="InterPro" id="IPR009042">
    <property type="entry name" value="RNA_pol_sigma70_r1_2"/>
</dbReference>
<dbReference type="InterPro" id="IPR007627">
    <property type="entry name" value="RNA_pol_sigma70_r2"/>
</dbReference>
<dbReference type="InterPro" id="IPR007624">
    <property type="entry name" value="RNA_pol_sigma70_r3"/>
</dbReference>
<dbReference type="InterPro" id="IPR007630">
    <property type="entry name" value="RNA_pol_sigma70_r4"/>
</dbReference>
<dbReference type="InterPro" id="IPR007631">
    <property type="entry name" value="RNA_pol_sigma_70_non-ess"/>
</dbReference>
<dbReference type="InterPro" id="IPR007127">
    <property type="entry name" value="RNA_pol_sigma_70_r1_1"/>
</dbReference>
<dbReference type="InterPro" id="IPR042189">
    <property type="entry name" value="RNA_pol_sigma_70_r1_1_sf"/>
</dbReference>
<dbReference type="InterPro" id="IPR013325">
    <property type="entry name" value="RNA_pol_sigma_r2"/>
</dbReference>
<dbReference type="InterPro" id="IPR013324">
    <property type="entry name" value="RNA_pol_sigma_r3/r4-like"/>
</dbReference>
<dbReference type="InterPro" id="IPR012760">
    <property type="entry name" value="RNA_pol_sigma_RpoD_C"/>
</dbReference>
<dbReference type="InterPro" id="IPR050239">
    <property type="entry name" value="Sigma-70_RNA_pol_init_factors"/>
</dbReference>
<dbReference type="InterPro" id="IPR028630">
    <property type="entry name" value="Sigma70_RpoD"/>
</dbReference>
<dbReference type="InterPro" id="IPR036388">
    <property type="entry name" value="WH-like_DNA-bd_sf"/>
</dbReference>
<dbReference type="NCBIfam" id="NF004208">
    <property type="entry name" value="PRK05658.1"/>
    <property type="match status" value="1"/>
</dbReference>
<dbReference type="NCBIfam" id="TIGR02393">
    <property type="entry name" value="RpoD_Cterm"/>
    <property type="match status" value="1"/>
</dbReference>
<dbReference type="NCBIfam" id="TIGR02937">
    <property type="entry name" value="sigma70-ECF"/>
    <property type="match status" value="1"/>
</dbReference>
<dbReference type="PANTHER" id="PTHR30603">
    <property type="entry name" value="RNA POLYMERASE SIGMA FACTOR RPO"/>
    <property type="match status" value="1"/>
</dbReference>
<dbReference type="PANTHER" id="PTHR30603:SF60">
    <property type="entry name" value="RNA POLYMERASE SIGMA FACTOR RPOD"/>
    <property type="match status" value="1"/>
</dbReference>
<dbReference type="Pfam" id="PF04546">
    <property type="entry name" value="Sigma70_ner"/>
    <property type="match status" value="1"/>
</dbReference>
<dbReference type="Pfam" id="PF03979">
    <property type="entry name" value="Sigma70_r1_1"/>
    <property type="match status" value="1"/>
</dbReference>
<dbReference type="Pfam" id="PF00140">
    <property type="entry name" value="Sigma70_r1_2"/>
    <property type="match status" value="1"/>
</dbReference>
<dbReference type="Pfam" id="PF04542">
    <property type="entry name" value="Sigma70_r2"/>
    <property type="match status" value="1"/>
</dbReference>
<dbReference type="Pfam" id="PF04539">
    <property type="entry name" value="Sigma70_r3"/>
    <property type="match status" value="1"/>
</dbReference>
<dbReference type="Pfam" id="PF04545">
    <property type="entry name" value="Sigma70_r4"/>
    <property type="match status" value="1"/>
</dbReference>
<dbReference type="PRINTS" id="PR00046">
    <property type="entry name" value="SIGMA70FCT"/>
</dbReference>
<dbReference type="SUPFAM" id="SSF88946">
    <property type="entry name" value="Sigma2 domain of RNA polymerase sigma factors"/>
    <property type="match status" value="1"/>
</dbReference>
<dbReference type="SUPFAM" id="SSF88659">
    <property type="entry name" value="Sigma3 and sigma4 domains of RNA polymerase sigma factors"/>
    <property type="match status" value="2"/>
</dbReference>
<dbReference type="PROSITE" id="PS00715">
    <property type="entry name" value="SIGMA70_1"/>
    <property type="match status" value="1"/>
</dbReference>
<dbReference type="PROSITE" id="PS00716">
    <property type="entry name" value="SIGMA70_2"/>
    <property type="match status" value="1"/>
</dbReference>
<protein>
    <recommendedName>
        <fullName evidence="1">RNA polymerase sigma factor RpoD</fullName>
    </recommendedName>
    <alternativeName>
        <fullName evidence="1">Sigma-70</fullName>
    </alternativeName>
</protein>
<reference key="1">
    <citation type="journal article" date="2006" name="PLoS Genet.">
        <title>Genome sequence of Rickettsia bellii illuminates the role of amoebae in gene exchanges between intracellular pathogens.</title>
        <authorList>
            <person name="Ogata H."/>
            <person name="La Scola B."/>
            <person name="Audic S."/>
            <person name="Renesto P."/>
            <person name="Blanc G."/>
            <person name="Robert C."/>
            <person name="Fournier P.-E."/>
            <person name="Claverie J.-M."/>
            <person name="Raoult D."/>
        </authorList>
    </citation>
    <scope>NUCLEOTIDE SEQUENCE [LARGE SCALE GENOMIC DNA]</scope>
    <source>
        <strain>RML369-C</strain>
    </source>
</reference>
<sequence length="641" mass="73734">MTNTDNNNLNKIDSLLKKAKSKKGSVTYNDINRALPDGTSVEEIDKVMFRFSEAEVDILDTNEDDAIKIDDMEMEEGFKISTNIDHEPEDETEEENIGTTDDPVRLYLKDMGGVDLLTRENEVEIAKRIEEGRKTLIAALCRSPIAMDKFRKWYADLVNENNMLLRDLIDLESNMMHDDETSESEDDHNSDHEEEEQDHDHDHEENILSMSKVETQILPNIIERMKKIAFICEELLIETKKSFEKSAGPKILQNSKKYNDNLELLISEVSEIHFNSKRTEEILSEMYRINRDLINKETAFLKLAEKYGITRQNFLDEYIGAVINAAWKEKMLKNKKAGWKELLTKESDYIDQMIAELSAIEINTGLLVNDFKKLVNAIQKSERQTLQAKKDMIEANLRLVISIAKKYANRGLQFLDLIQEGNIGLMKAVDKFEYRRGYKFSTYATWWIRQAITRAIADQARTIRIPVHMIETINKIIRTSRQMLNELGYEPTPAEIAARLSMPIDKVRKVMKIAKEPISLENPVGDGDDNSYLGDFIEDKNAVAPIDAAIQSNLREVTTRVLATLTPREERVLRMRFGIGMNTDHTLEEVGQQFKVTRERIRQIESKALRKLQHPIRSKKLNSFRSGGKRGDGNPSDLLEA</sequence>
<proteinExistence type="inferred from homology"/>
<accession>Q1RKH7</accession>
<name>RPOD_RICBR</name>
<feature type="chain" id="PRO_0000286504" description="RNA polymerase sigma factor RpoD">
    <location>
        <begin position="1"/>
        <end position="641"/>
    </location>
</feature>
<feature type="DNA-binding region" description="H-T-H motif" evidence="1">
    <location>
        <begin position="587"/>
        <end position="606"/>
    </location>
</feature>
<feature type="region of interest" description="Disordered" evidence="2">
    <location>
        <begin position="178"/>
        <end position="209"/>
    </location>
</feature>
<feature type="region of interest" description="Sigma-70 factor domain-2" evidence="1">
    <location>
        <begin position="392"/>
        <end position="462"/>
    </location>
</feature>
<feature type="region of interest" description="Sigma-70 factor domain-3" evidence="1">
    <location>
        <begin position="471"/>
        <end position="548"/>
    </location>
</feature>
<feature type="region of interest" description="Sigma-70 factor domain-4" evidence="1">
    <location>
        <begin position="561"/>
        <end position="614"/>
    </location>
</feature>
<feature type="region of interest" description="Disordered" evidence="2">
    <location>
        <begin position="615"/>
        <end position="641"/>
    </location>
</feature>
<feature type="short sequence motif" description="Interaction with polymerase core subunit RpoC">
    <location>
        <begin position="416"/>
        <end position="419"/>
    </location>
</feature>
<feature type="compositionally biased region" description="Acidic residues" evidence="2">
    <location>
        <begin position="180"/>
        <end position="197"/>
    </location>
</feature>
<organism>
    <name type="scientific">Rickettsia bellii (strain RML369-C)</name>
    <dbReference type="NCBI Taxonomy" id="336407"/>
    <lineage>
        <taxon>Bacteria</taxon>
        <taxon>Pseudomonadati</taxon>
        <taxon>Pseudomonadota</taxon>
        <taxon>Alphaproteobacteria</taxon>
        <taxon>Rickettsiales</taxon>
        <taxon>Rickettsiaceae</taxon>
        <taxon>Rickettsieae</taxon>
        <taxon>Rickettsia</taxon>
        <taxon>belli group</taxon>
    </lineage>
</organism>
<gene>
    <name evidence="1" type="primary">rpoD</name>
    <name type="ordered locus">RBE_0056</name>
</gene>
<keyword id="KW-0963">Cytoplasm</keyword>
<keyword id="KW-0238">DNA-binding</keyword>
<keyword id="KW-0731">Sigma factor</keyword>
<keyword id="KW-0804">Transcription</keyword>
<keyword id="KW-0805">Transcription regulation</keyword>
<comment type="function">
    <text evidence="1">Sigma factors are initiation factors that promote the attachment of RNA polymerase to specific initiation sites and are then released. This sigma factor is the primary sigma factor during exponential growth.</text>
</comment>
<comment type="subunit">
    <text evidence="1">Interacts transiently with the RNA polymerase catalytic core.</text>
</comment>
<comment type="subcellular location">
    <subcellularLocation>
        <location evidence="1">Cytoplasm</location>
    </subcellularLocation>
</comment>
<comment type="similarity">
    <text evidence="1">Belongs to the sigma-70 factor family. RpoD/SigA subfamily.</text>
</comment>
<evidence type="ECO:0000255" key="1">
    <source>
        <dbReference type="HAMAP-Rule" id="MF_00963"/>
    </source>
</evidence>
<evidence type="ECO:0000256" key="2">
    <source>
        <dbReference type="SAM" id="MobiDB-lite"/>
    </source>
</evidence>